<accession>O43866</accession>
<accession>A8K7M5</accession>
<accession>Q6UX63</accession>
<evidence type="ECO:0000250" key="1">
    <source>
        <dbReference type="UniProtKB" id="Q9QWK4"/>
    </source>
</evidence>
<evidence type="ECO:0000255" key="2">
    <source>
        <dbReference type="PROSITE-ProRule" id="PRU00196"/>
    </source>
</evidence>
<evidence type="ECO:0000269" key="3">
    <source>
    </source>
</evidence>
<evidence type="ECO:0000269" key="4">
    <source>
    </source>
</evidence>
<evidence type="ECO:0000269" key="5">
    <source>
    </source>
</evidence>
<evidence type="ECO:0000269" key="6">
    <source>
    </source>
</evidence>
<evidence type="ECO:0000269" key="7">
    <source>
    </source>
</evidence>
<evidence type="ECO:0000269" key="8">
    <source>
    </source>
</evidence>
<evidence type="ECO:0000269" key="9">
    <source>
    </source>
</evidence>
<evidence type="ECO:0000269" key="10">
    <source>
    </source>
</evidence>
<evidence type="ECO:0000269" key="11">
    <source>
    </source>
</evidence>
<evidence type="ECO:0000269" key="12">
    <source>
    </source>
</evidence>
<evidence type="ECO:0000303" key="13">
    <source>
    </source>
</evidence>
<evidence type="ECO:0000303" key="14">
    <source>
    </source>
</evidence>
<evidence type="ECO:0000303" key="15">
    <source>
    </source>
</evidence>
<evidence type="ECO:0000303" key="16">
    <source>
    </source>
</evidence>
<evidence type="ECO:0000303" key="17">
    <source ref="2"/>
</evidence>
<evidence type="ECO:0000305" key="18"/>
<evidence type="ECO:0007829" key="19">
    <source>
        <dbReference type="PDB" id="8WYR"/>
    </source>
</evidence>
<evidence type="ECO:0007829" key="20">
    <source>
        <dbReference type="PDB" id="8WYS"/>
    </source>
</evidence>
<proteinExistence type="evidence at protein level"/>
<reference key="1">
    <citation type="journal article" date="1997" name="J. Biol. Chem.">
        <title>Molecular cloning, mapping to human chromosome 1 q21-q23, and cell binding characteristics of Spalpha, a new member of the scavenger receptor cysteine-rich (SRCR) family of proteins.</title>
        <authorList>
            <person name="Gebe J.A."/>
            <person name="Kiener P.A."/>
            <person name="Ring H.Z."/>
            <person name="Li X."/>
            <person name="Francke U."/>
            <person name="Aruffo A."/>
        </authorList>
    </citation>
    <scope>NUCLEOTIDE SEQUENCE [MRNA]</scope>
    <scope>PROTEIN SEQUENCE OF N-TERMINUS</scope>
    <scope>TISSUE SPECIFICITY</scope>
    <source>
        <tissue>Spleen</tissue>
    </source>
</reference>
<reference key="2">
    <citation type="submission" date="1997-06" db="EMBL/GenBank/DDBJ databases">
        <title>Human CT-2 cDNA.</title>
        <authorList>
            <person name="Miyazaki T."/>
            <person name="Yusa S."/>
        </authorList>
    </citation>
    <scope>NUCLEOTIDE SEQUENCE [MRNA]</scope>
</reference>
<reference key="3">
    <citation type="journal article" date="2003" name="Genome Res.">
        <title>The secreted protein discovery initiative (SPDI), a large-scale effort to identify novel human secreted and transmembrane proteins: a bioinformatics assessment.</title>
        <authorList>
            <person name="Clark H.F."/>
            <person name="Gurney A.L."/>
            <person name="Abaya E."/>
            <person name="Baker K."/>
            <person name="Baldwin D.T."/>
            <person name="Brush J."/>
            <person name="Chen J."/>
            <person name="Chow B."/>
            <person name="Chui C."/>
            <person name="Crowley C."/>
            <person name="Currell B."/>
            <person name="Deuel B."/>
            <person name="Dowd P."/>
            <person name="Eaton D."/>
            <person name="Foster J.S."/>
            <person name="Grimaldi C."/>
            <person name="Gu Q."/>
            <person name="Hass P.E."/>
            <person name="Heldens S."/>
            <person name="Huang A."/>
            <person name="Kim H.S."/>
            <person name="Klimowski L."/>
            <person name="Jin Y."/>
            <person name="Johnson S."/>
            <person name="Lee J."/>
            <person name="Lewis L."/>
            <person name="Liao D."/>
            <person name="Mark M.R."/>
            <person name="Robbie E."/>
            <person name="Sanchez C."/>
            <person name="Schoenfeld J."/>
            <person name="Seshagiri S."/>
            <person name="Simmons L."/>
            <person name="Singh J."/>
            <person name="Smith V."/>
            <person name="Stinson J."/>
            <person name="Vagts A."/>
            <person name="Vandlen R.L."/>
            <person name="Watanabe C."/>
            <person name="Wieand D."/>
            <person name="Woods K."/>
            <person name="Xie M.-H."/>
            <person name="Yansura D.G."/>
            <person name="Yi S."/>
            <person name="Yu G."/>
            <person name="Yuan J."/>
            <person name="Zhang M."/>
            <person name="Zhang Z."/>
            <person name="Goddard A.D."/>
            <person name="Wood W.I."/>
            <person name="Godowski P.J."/>
            <person name="Gray A.M."/>
        </authorList>
    </citation>
    <scope>NUCLEOTIDE SEQUENCE [LARGE SCALE MRNA]</scope>
</reference>
<reference key="4">
    <citation type="journal article" date="2004" name="Nat. Genet.">
        <title>Complete sequencing and characterization of 21,243 full-length human cDNAs.</title>
        <authorList>
            <person name="Ota T."/>
            <person name="Suzuki Y."/>
            <person name="Nishikawa T."/>
            <person name="Otsuki T."/>
            <person name="Sugiyama T."/>
            <person name="Irie R."/>
            <person name="Wakamatsu A."/>
            <person name="Hayashi K."/>
            <person name="Sato H."/>
            <person name="Nagai K."/>
            <person name="Kimura K."/>
            <person name="Makita H."/>
            <person name="Sekine M."/>
            <person name="Obayashi M."/>
            <person name="Nishi T."/>
            <person name="Shibahara T."/>
            <person name="Tanaka T."/>
            <person name="Ishii S."/>
            <person name="Yamamoto J."/>
            <person name="Saito K."/>
            <person name="Kawai Y."/>
            <person name="Isono Y."/>
            <person name="Nakamura Y."/>
            <person name="Nagahari K."/>
            <person name="Murakami K."/>
            <person name="Yasuda T."/>
            <person name="Iwayanagi T."/>
            <person name="Wagatsuma M."/>
            <person name="Shiratori A."/>
            <person name="Sudo H."/>
            <person name="Hosoiri T."/>
            <person name="Kaku Y."/>
            <person name="Kodaira H."/>
            <person name="Kondo H."/>
            <person name="Sugawara M."/>
            <person name="Takahashi M."/>
            <person name="Kanda K."/>
            <person name="Yokoi T."/>
            <person name="Furuya T."/>
            <person name="Kikkawa E."/>
            <person name="Omura Y."/>
            <person name="Abe K."/>
            <person name="Kamihara K."/>
            <person name="Katsuta N."/>
            <person name="Sato K."/>
            <person name="Tanikawa M."/>
            <person name="Yamazaki M."/>
            <person name="Ninomiya K."/>
            <person name="Ishibashi T."/>
            <person name="Yamashita H."/>
            <person name="Murakawa K."/>
            <person name="Fujimori K."/>
            <person name="Tanai H."/>
            <person name="Kimata M."/>
            <person name="Watanabe M."/>
            <person name="Hiraoka S."/>
            <person name="Chiba Y."/>
            <person name="Ishida S."/>
            <person name="Ono Y."/>
            <person name="Takiguchi S."/>
            <person name="Watanabe S."/>
            <person name="Yosida M."/>
            <person name="Hotuta T."/>
            <person name="Kusano J."/>
            <person name="Kanehori K."/>
            <person name="Takahashi-Fujii A."/>
            <person name="Hara H."/>
            <person name="Tanase T.-O."/>
            <person name="Nomura Y."/>
            <person name="Togiya S."/>
            <person name="Komai F."/>
            <person name="Hara R."/>
            <person name="Takeuchi K."/>
            <person name="Arita M."/>
            <person name="Imose N."/>
            <person name="Musashino K."/>
            <person name="Yuuki H."/>
            <person name="Oshima A."/>
            <person name="Sasaki N."/>
            <person name="Aotsuka S."/>
            <person name="Yoshikawa Y."/>
            <person name="Matsunawa H."/>
            <person name="Ichihara T."/>
            <person name="Shiohata N."/>
            <person name="Sano S."/>
            <person name="Moriya S."/>
            <person name="Momiyama H."/>
            <person name="Satoh N."/>
            <person name="Takami S."/>
            <person name="Terashima Y."/>
            <person name="Suzuki O."/>
            <person name="Nakagawa S."/>
            <person name="Senoh A."/>
            <person name="Mizoguchi H."/>
            <person name="Goto Y."/>
            <person name="Shimizu F."/>
            <person name="Wakebe H."/>
            <person name="Hishigaki H."/>
            <person name="Watanabe T."/>
            <person name="Sugiyama A."/>
            <person name="Takemoto M."/>
            <person name="Kawakami B."/>
            <person name="Yamazaki M."/>
            <person name="Watanabe K."/>
            <person name="Kumagai A."/>
            <person name="Itakura S."/>
            <person name="Fukuzumi Y."/>
            <person name="Fujimori Y."/>
            <person name="Komiyama M."/>
            <person name="Tashiro H."/>
            <person name="Tanigami A."/>
            <person name="Fujiwara T."/>
            <person name="Ono T."/>
            <person name="Yamada K."/>
            <person name="Fujii Y."/>
            <person name="Ozaki K."/>
            <person name="Hirao M."/>
            <person name="Ohmori Y."/>
            <person name="Kawabata A."/>
            <person name="Hikiji T."/>
            <person name="Kobatake N."/>
            <person name="Inagaki H."/>
            <person name="Ikema Y."/>
            <person name="Okamoto S."/>
            <person name="Okitani R."/>
            <person name="Kawakami T."/>
            <person name="Noguchi S."/>
            <person name="Itoh T."/>
            <person name="Shigeta K."/>
            <person name="Senba T."/>
            <person name="Matsumura K."/>
            <person name="Nakajima Y."/>
            <person name="Mizuno T."/>
            <person name="Morinaga M."/>
            <person name="Sasaki M."/>
            <person name="Togashi T."/>
            <person name="Oyama M."/>
            <person name="Hata H."/>
            <person name="Watanabe M."/>
            <person name="Komatsu T."/>
            <person name="Mizushima-Sugano J."/>
            <person name="Satoh T."/>
            <person name="Shirai Y."/>
            <person name="Takahashi Y."/>
            <person name="Nakagawa K."/>
            <person name="Okumura K."/>
            <person name="Nagase T."/>
            <person name="Nomura N."/>
            <person name="Kikuchi H."/>
            <person name="Masuho Y."/>
            <person name="Yamashita R."/>
            <person name="Nakai K."/>
            <person name="Yada T."/>
            <person name="Nakamura Y."/>
            <person name="Ohara O."/>
            <person name="Isogai T."/>
            <person name="Sugano S."/>
        </authorList>
    </citation>
    <scope>NUCLEOTIDE SEQUENCE [LARGE SCALE MRNA]</scope>
    <source>
        <tissue>Spleen</tissue>
    </source>
</reference>
<reference key="5">
    <citation type="journal article" date="2006" name="Nature">
        <title>The DNA sequence and biological annotation of human chromosome 1.</title>
        <authorList>
            <person name="Gregory S.G."/>
            <person name="Barlow K.F."/>
            <person name="McLay K.E."/>
            <person name="Kaul R."/>
            <person name="Swarbreck D."/>
            <person name="Dunham A."/>
            <person name="Scott C.E."/>
            <person name="Howe K.L."/>
            <person name="Woodfine K."/>
            <person name="Spencer C.C.A."/>
            <person name="Jones M.C."/>
            <person name="Gillson C."/>
            <person name="Searle S."/>
            <person name="Zhou Y."/>
            <person name="Kokocinski F."/>
            <person name="McDonald L."/>
            <person name="Evans R."/>
            <person name="Phillips K."/>
            <person name="Atkinson A."/>
            <person name="Cooper R."/>
            <person name="Jones C."/>
            <person name="Hall R.E."/>
            <person name="Andrews T.D."/>
            <person name="Lloyd C."/>
            <person name="Ainscough R."/>
            <person name="Almeida J.P."/>
            <person name="Ambrose K.D."/>
            <person name="Anderson F."/>
            <person name="Andrew R.W."/>
            <person name="Ashwell R.I.S."/>
            <person name="Aubin K."/>
            <person name="Babbage A.K."/>
            <person name="Bagguley C.L."/>
            <person name="Bailey J."/>
            <person name="Beasley H."/>
            <person name="Bethel G."/>
            <person name="Bird C.P."/>
            <person name="Bray-Allen S."/>
            <person name="Brown J.Y."/>
            <person name="Brown A.J."/>
            <person name="Buckley D."/>
            <person name="Burton J."/>
            <person name="Bye J."/>
            <person name="Carder C."/>
            <person name="Chapman J.C."/>
            <person name="Clark S.Y."/>
            <person name="Clarke G."/>
            <person name="Clee C."/>
            <person name="Cobley V."/>
            <person name="Collier R.E."/>
            <person name="Corby N."/>
            <person name="Coville G.J."/>
            <person name="Davies J."/>
            <person name="Deadman R."/>
            <person name="Dunn M."/>
            <person name="Earthrowl M."/>
            <person name="Ellington A.G."/>
            <person name="Errington H."/>
            <person name="Frankish A."/>
            <person name="Frankland J."/>
            <person name="French L."/>
            <person name="Garner P."/>
            <person name="Garnett J."/>
            <person name="Gay L."/>
            <person name="Ghori M.R.J."/>
            <person name="Gibson R."/>
            <person name="Gilby L.M."/>
            <person name="Gillett W."/>
            <person name="Glithero R.J."/>
            <person name="Grafham D.V."/>
            <person name="Griffiths C."/>
            <person name="Griffiths-Jones S."/>
            <person name="Grocock R."/>
            <person name="Hammond S."/>
            <person name="Harrison E.S.I."/>
            <person name="Hart E."/>
            <person name="Haugen E."/>
            <person name="Heath P.D."/>
            <person name="Holmes S."/>
            <person name="Holt K."/>
            <person name="Howden P.J."/>
            <person name="Hunt A.R."/>
            <person name="Hunt S.E."/>
            <person name="Hunter G."/>
            <person name="Isherwood J."/>
            <person name="James R."/>
            <person name="Johnson C."/>
            <person name="Johnson D."/>
            <person name="Joy A."/>
            <person name="Kay M."/>
            <person name="Kershaw J.K."/>
            <person name="Kibukawa M."/>
            <person name="Kimberley A.M."/>
            <person name="King A."/>
            <person name="Knights A.J."/>
            <person name="Lad H."/>
            <person name="Laird G."/>
            <person name="Lawlor S."/>
            <person name="Leongamornlert D.A."/>
            <person name="Lloyd D.M."/>
            <person name="Loveland J."/>
            <person name="Lovell J."/>
            <person name="Lush M.J."/>
            <person name="Lyne R."/>
            <person name="Martin S."/>
            <person name="Mashreghi-Mohammadi M."/>
            <person name="Matthews L."/>
            <person name="Matthews N.S.W."/>
            <person name="McLaren S."/>
            <person name="Milne S."/>
            <person name="Mistry S."/>
            <person name="Moore M.J.F."/>
            <person name="Nickerson T."/>
            <person name="O'Dell C.N."/>
            <person name="Oliver K."/>
            <person name="Palmeiri A."/>
            <person name="Palmer S.A."/>
            <person name="Parker A."/>
            <person name="Patel D."/>
            <person name="Pearce A.V."/>
            <person name="Peck A.I."/>
            <person name="Pelan S."/>
            <person name="Phelps K."/>
            <person name="Phillimore B.J."/>
            <person name="Plumb R."/>
            <person name="Rajan J."/>
            <person name="Raymond C."/>
            <person name="Rouse G."/>
            <person name="Saenphimmachak C."/>
            <person name="Sehra H.K."/>
            <person name="Sheridan E."/>
            <person name="Shownkeen R."/>
            <person name="Sims S."/>
            <person name="Skuce C.D."/>
            <person name="Smith M."/>
            <person name="Steward C."/>
            <person name="Subramanian S."/>
            <person name="Sycamore N."/>
            <person name="Tracey A."/>
            <person name="Tromans A."/>
            <person name="Van Helmond Z."/>
            <person name="Wall M."/>
            <person name="Wallis J.M."/>
            <person name="White S."/>
            <person name="Whitehead S.L."/>
            <person name="Wilkinson J.E."/>
            <person name="Willey D.L."/>
            <person name="Williams H."/>
            <person name="Wilming L."/>
            <person name="Wray P.W."/>
            <person name="Wu Z."/>
            <person name="Coulson A."/>
            <person name="Vaudin M."/>
            <person name="Sulston J.E."/>
            <person name="Durbin R.M."/>
            <person name="Hubbard T."/>
            <person name="Wooster R."/>
            <person name="Dunham I."/>
            <person name="Carter N.P."/>
            <person name="McVean G."/>
            <person name="Ross M.T."/>
            <person name="Harrow J."/>
            <person name="Olson M.V."/>
            <person name="Beck S."/>
            <person name="Rogers J."/>
            <person name="Bentley D.R."/>
        </authorList>
    </citation>
    <scope>NUCLEOTIDE SEQUENCE [LARGE SCALE GENOMIC DNA]</scope>
</reference>
<reference key="6">
    <citation type="submission" date="2005-09" db="EMBL/GenBank/DDBJ databases">
        <authorList>
            <person name="Mural R.J."/>
            <person name="Istrail S."/>
            <person name="Sutton G.G."/>
            <person name="Florea L."/>
            <person name="Halpern A.L."/>
            <person name="Mobarry C.M."/>
            <person name="Lippert R."/>
            <person name="Walenz B."/>
            <person name="Shatkay H."/>
            <person name="Dew I."/>
            <person name="Miller J.R."/>
            <person name="Flanigan M.J."/>
            <person name="Edwards N.J."/>
            <person name="Bolanos R."/>
            <person name="Fasulo D."/>
            <person name="Halldorsson B.V."/>
            <person name="Hannenhalli S."/>
            <person name="Turner R."/>
            <person name="Yooseph S."/>
            <person name="Lu F."/>
            <person name="Nusskern D.R."/>
            <person name="Shue B.C."/>
            <person name="Zheng X.H."/>
            <person name="Zhong F."/>
            <person name="Delcher A.L."/>
            <person name="Huson D.H."/>
            <person name="Kravitz S.A."/>
            <person name="Mouchard L."/>
            <person name="Reinert K."/>
            <person name="Remington K.A."/>
            <person name="Clark A.G."/>
            <person name="Waterman M.S."/>
            <person name="Eichler E.E."/>
            <person name="Adams M.D."/>
            <person name="Hunkapiller M.W."/>
            <person name="Myers E.W."/>
            <person name="Venter J.C."/>
        </authorList>
    </citation>
    <scope>NUCLEOTIDE SEQUENCE [LARGE SCALE GENOMIC DNA]</scope>
</reference>
<reference key="7">
    <citation type="journal article" date="2004" name="Genome Res.">
        <title>The status, quality, and expansion of the NIH full-length cDNA project: the Mammalian Gene Collection (MGC).</title>
        <authorList>
            <consortium name="The MGC Project Team"/>
        </authorList>
    </citation>
    <scope>NUCLEOTIDE SEQUENCE [LARGE SCALE MRNA]</scope>
    <source>
        <tissue>Pancreas</tissue>
        <tissue>Spleen</tissue>
    </source>
</reference>
<reference key="8">
    <citation type="journal article" date="1994" name="J. Immunol. Methods">
        <title>Two-dimensional polyacrylamide gel electrophoresis analysis of cryoglobulins and identification of an IgM-associated peptide.</title>
        <authorList>
            <person name="Tissot J.-D."/>
            <person name="Schifferli J.A."/>
            <person name="Hochstrasser D.F."/>
            <person name="Pasquali C."/>
            <person name="Spertini F."/>
            <person name="Clement F."/>
            <person name="Frutiger S."/>
            <person name="Paquet N."/>
            <person name="Hughes G.J."/>
            <person name="Schneider P."/>
        </authorList>
    </citation>
    <scope>PROTEIN SEQUENCE OF 20-31</scope>
    <scope>INTERACTION WITH IGM</scope>
</reference>
<reference key="9">
    <citation type="journal article" date="2002" name="Electrophoresis">
        <title>IgM are associated to Spalpha (CD5 antigen-like).</title>
        <authorList>
            <person name="Tissot J.D."/>
            <person name="Sanchez J.-C."/>
            <person name="Vuadens F."/>
            <person name="Scherl A."/>
            <person name="Schifferli J.A."/>
            <person name="Hochstrasser D.F."/>
            <person name="Schneider P."/>
            <person name="Duchosal M.A."/>
        </authorList>
    </citation>
    <scope>PARTIAL PROTEIN SEQUENCE</scope>
    <scope>IDENTIFICATION BY MASS SPECTROMETRY</scope>
</reference>
<reference key="10">
    <citation type="journal article" date="2004" name="Protein Sci.">
        <title>Signal peptide prediction based on analysis of experimentally verified cleavage sites.</title>
        <authorList>
            <person name="Zhang Z."/>
            <person name="Henzel W.J."/>
        </authorList>
    </citation>
    <scope>PROTEIN SEQUENCE OF 20-34</scope>
</reference>
<reference key="11">
    <citation type="journal article" date="2005" name="J. Biol. Chem.">
        <title>A role for human Sp alpha as a pattern recognition receptor.</title>
        <authorList>
            <person name="Sarrias M.R."/>
            <person name="Rosello S."/>
            <person name="Sanchez-Barbero F."/>
            <person name="Sierra J.M."/>
            <person name="Vila J."/>
            <person name="Yelamos J."/>
            <person name="Vives J."/>
            <person name="Casals C."/>
            <person name="Lozano F."/>
        </authorList>
    </citation>
    <scope>FUNCTION</scope>
</reference>
<reference key="12">
    <citation type="journal article" date="2012" name="FEBS Lett.">
        <title>Modification of N-glycosylation modulates the secretion and lipolytic function of apoptosis inhibitor of macrophage (AIM).</title>
        <authorList>
            <person name="Mori M."/>
            <person name="Kimura H."/>
            <person name="Iwamura Y."/>
            <person name="Arai S."/>
            <person name="Miyazaki T."/>
        </authorList>
    </citation>
    <scope>MUTAGENESIS OF SER-123 AND 129-SER--SER-132</scope>
</reference>
<reference key="13">
    <citation type="journal article" date="2013" name="PLoS ONE">
        <title>The scavenger protein apoptosis inhibitor of macrophages (AIM) potentiates the antimicrobial response against Mycobacterium tuberculosis by enhancing autophagy.</title>
        <authorList>
            <person name="Sanjurjo L."/>
            <person name="Amezaga N."/>
            <person name="Vilaplana C."/>
            <person name="Caceres N."/>
            <person name="Marzo E."/>
            <person name="Valeri M."/>
            <person name="Cardona P.J."/>
            <person name="Sarrias M.R."/>
        </authorList>
    </citation>
    <scope>FUNCTION</scope>
    <scope>SUBCELLULAR LOCATION</scope>
</reference>
<reference key="14">
    <citation type="journal article" date="2014" name="Cell. Mol. Immunol.">
        <title>The macrophage soluble receptor AIM/Api6/CD5L displays a broad pathogen recognition spectrum and is involved in early response to microbial aggression.</title>
        <authorList>
            <person name="Martinez V.G."/>
            <person name="Escoda-Ferran C."/>
            <person name="Tadeu Simoes I."/>
            <person name="Arai S."/>
            <person name="Orta Mascaro M."/>
            <person name="Carreras E."/>
            <person name="Martinez-Florensa M."/>
            <person name="Yelamos J."/>
            <person name="Miyazaki T."/>
            <person name="Lozano F."/>
        </authorList>
    </citation>
    <scope>FUNCTION</scope>
</reference>
<reference key="15">
    <citation type="journal article" date="2014" name="J. Leukoc. Biol.">
        <title>Human scavenger protein AIM increases foam cell formation and CD36-mediated oxLDL uptake.</title>
        <authorList>
            <person name="Amezaga N."/>
            <person name="Sanjurjo L."/>
            <person name="Julve J."/>
            <person name="Aran G."/>
            <person name="Perez-Cabezas B."/>
            <person name="Bastos-Amador P."/>
            <person name="Armengol C."/>
            <person name="Vilella R."/>
            <person name="Escola-Gil J.C."/>
            <person name="Blanco-Vaca F."/>
            <person name="Borras F.E."/>
            <person name="Valledor A.F."/>
            <person name="Sarrias M.R."/>
        </authorList>
    </citation>
    <scope>FUNCTION</scope>
</reference>
<reference key="16">
    <citation type="journal article" date="2014" name="J. Proteomics">
        <title>An enzyme assisted RP-RPLC approach for in-depth analysis of human liver phosphoproteome.</title>
        <authorList>
            <person name="Bian Y."/>
            <person name="Song C."/>
            <person name="Cheng K."/>
            <person name="Dong M."/>
            <person name="Wang F."/>
            <person name="Huang J."/>
            <person name="Sun D."/>
            <person name="Wang L."/>
            <person name="Ye M."/>
            <person name="Zou H."/>
        </authorList>
    </citation>
    <scope>IDENTIFICATION BY MASS SPECTROMETRY [LARGE SCALE ANALYSIS]</scope>
    <source>
        <tissue>Liver</tissue>
    </source>
</reference>
<reference key="17">
    <citation type="journal article" date="2014" name="PLoS ONE">
        <title>Stabilization and augmentation of circulating AIM in mice by synthesized IgM-Fc.</title>
        <authorList>
            <person name="Kai T."/>
            <person name="Yamazaki T."/>
            <person name="Arai S."/>
            <person name="Miyazaki T."/>
        </authorList>
    </citation>
    <scope>SUBCELLULAR LOCATION</scope>
    <scope>INTERACTION WITH IGM</scope>
</reference>
<reference key="18">
    <citation type="journal article" date="2015" name="Autophagy">
        <title>The human CD5L/AIM-CD36 axis: A novel autophagy inducer in macrophages that modulates inflammatory responses.</title>
        <authorList>
            <person name="Sanjurjo L."/>
            <person name="Amezaga N."/>
            <person name="Aran G."/>
            <person name="Naranjo-Gomez M."/>
            <person name="Arias L."/>
            <person name="Armengol C."/>
            <person name="Borras F.E."/>
            <person name="Sarrias M.R."/>
        </authorList>
    </citation>
    <scope>FUNCTION</scope>
</reference>
<gene>
    <name type="primary">CD5L</name>
    <name type="synonym">API6</name>
    <name evidence="13" type="ORF">UNQ203/PRO229</name>
</gene>
<feature type="signal peptide" evidence="3 11 12">
    <location>
        <begin position="1"/>
        <end position="19"/>
    </location>
</feature>
<feature type="chain" id="PRO_0000033225" description="CD5 antigen-like">
    <location>
        <begin position="20"/>
        <end position="347"/>
    </location>
</feature>
<feature type="domain" description="SRCR 1" evidence="2">
    <location>
        <begin position="24"/>
        <end position="125"/>
    </location>
</feature>
<feature type="domain" description="SRCR 2" evidence="2">
    <location>
        <begin position="138"/>
        <end position="239"/>
    </location>
</feature>
<feature type="domain" description="SRCR 3" evidence="2">
    <location>
        <begin position="244"/>
        <end position="346"/>
    </location>
</feature>
<feature type="disulfide bond" evidence="2">
    <location>
        <begin position="33"/>
        <end position="67"/>
    </location>
</feature>
<feature type="disulfide bond" evidence="2">
    <location>
        <begin position="49"/>
        <end position="114"/>
    </location>
</feature>
<feature type="disulfide bond" evidence="2">
    <location>
        <begin position="62"/>
        <end position="124"/>
    </location>
</feature>
<feature type="disulfide bond" evidence="2">
    <location>
        <begin position="96"/>
        <end position="106"/>
    </location>
</feature>
<feature type="disulfide bond" evidence="2">
    <location>
        <begin position="163"/>
        <end position="228"/>
    </location>
</feature>
<feature type="disulfide bond" evidence="2">
    <location>
        <begin position="176"/>
        <end position="238"/>
    </location>
</feature>
<feature type="disulfide bond" description="Interchain (with C-414 of IGHM)" evidence="1">
    <location>
        <position position="191"/>
    </location>
</feature>
<feature type="disulfide bond" evidence="2">
    <location>
        <begin position="208"/>
        <end position="218"/>
    </location>
</feature>
<feature type="disulfide bond" evidence="2">
    <location>
        <begin position="253"/>
        <end position="287"/>
    </location>
</feature>
<feature type="disulfide bond" evidence="2">
    <location>
        <begin position="269"/>
        <end position="335"/>
    </location>
</feature>
<feature type="disulfide bond" evidence="2">
    <location>
        <begin position="282"/>
        <end position="345"/>
    </location>
</feature>
<feature type="disulfide bond" evidence="2">
    <location>
        <begin position="315"/>
        <end position="325"/>
    </location>
</feature>
<feature type="sequence variant" id="VAR_033728" description="In dbSNP:rs11537583.">
    <original>D</original>
    <variation>E</variation>
    <location>
        <position position="117"/>
    </location>
</feature>
<feature type="mutagenesis site" description="No effect; when associated with 129-A--A-132." evidence="5">
    <original>S</original>
    <variation>A</variation>
    <location>
        <position position="123"/>
    </location>
</feature>
<feature type="mutagenesis site" description="No effect; when associated with A-123." evidence="5">
    <original>SSFS</original>
    <variation>AAFA</variation>
    <location>
        <begin position="129"/>
        <end position="132"/>
    </location>
</feature>
<feature type="sequence conflict" description="In Ref. 3; AAQ88858." evidence="18" ref="3">
    <original>G</original>
    <variation>V</variation>
    <location>
        <position position="347"/>
    </location>
</feature>
<feature type="strand" evidence="19">
    <location>
        <begin position="140"/>
        <end position="155"/>
    </location>
</feature>
<feature type="strand" evidence="19">
    <location>
        <begin position="158"/>
        <end position="161"/>
    </location>
</feature>
<feature type="helix" evidence="19">
    <location>
        <begin position="169"/>
        <end position="178"/>
    </location>
</feature>
<feature type="strand" evidence="19">
    <location>
        <begin position="186"/>
        <end position="188"/>
    </location>
</feature>
<feature type="helix" evidence="19">
    <location>
        <begin position="194"/>
        <end position="196"/>
    </location>
</feature>
<feature type="strand" evidence="19">
    <location>
        <begin position="212"/>
        <end position="214"/>
    </location>
</feature>
<feature type="turn" evidence="20">
    <location>
        <begin position="215"/>
        <end position="217"/>
    </location>
</feature>
<feature type="strand" evidence="19">
    <location>
        <begin position="235"/>
        <end position="237"/>
    </location>
</feature>
<feature type="strand" evidence="19">
    <location>
        <begin position="243"/>
        <end position="251"/>
    </location>
</feature>
<feature type="strand" evidence="19">
    <location>
        <begin position="254"/>
        <end position="269"/>
    </location>
</feature>
<feature type="helix" evidence="19">
    <location>
        <begin position="275"/>
        <end position="285"/>
    </location>
</feature>
<feature type="helix" evidence="19">
    <location>
        <begin position="296"/>
        <end position="300"/>
    </location>
</feature>
<feature type="strand" evidence="19">
    <location>
        <begin position="308"/>
        <end position="312"/>
    </location>
</feature>
<feature type="strand" evidence="19">
    <location>
        <begin position="320"/>
        <end position="322"/>
    </location>
</feature>
<feature type="helix" evidence="19">
    <location>
        <begin position="337"/>
        <end position="339"/>
    </location>
</feature>
<feature type="strand" evidence="19">
    <location>
        <begin position="342"/>
        <end position="344"/>
    </location>
</feature>
<dbReference type="EMBL" id="U82812">
    <property type="protein sequence ID" value="AAB91989.1"/>
    <property type="molecule type" value="mRNA"/>
</dbReference>
<dbReference type="EMBL" id="AF011429">
    <property type="protein sequence ID" value="AAD01446.1"/>
    <property type="molecule type" value="mRNA"/>
</dbReference>
<dbReference type="EMBL" id="AY358494">
    <property type="protein sequence ID" value="AAQ88858.1"/>
    <property type="molecule type" value="mRNA"/>
</dbReference>
<dbReference type="EMBL" id="AK292040">
    <property type="protein sequence ID" value="BAF84729.1"/>
    <property type="molecule type" value="mRNA"/>
</dbReference>
<dbReference type="EMBL" id="AL139409">
    <property type="status" value="NOT_ANNOTATED_CDS"/>
    <property type="molecule type" value="Genomic_DNA"/>
</dbReference>
<dbReference type="EMBL" id="CH471121">
    <property type="protein sequence ID" value="EAW52859.1"/>
    <property type="molecule type" value="Genomic_DNA"/>
</dbReference>
<dbReference type="EMBL" id="BC033586">
    <property type="protein sequence ID" value="AAH33586.1"/>
    <property type="molecule type" value="mRNA"/>
</dbReference>
<dbReference type="CCDS" id="CCDS1171.1"/>
<dbReference type="RefSeq" id="NP_001334627.1">
    <property type="nucleotide sequence ID" value="NM_001347698.1"/>
</dbReference>
<dbReference type="RefSeq" id="NP_005885.1">
    <property type="nucleotide sequence ID" value="NM_005894.3"/>
</dbReference>
<dbReference type="PDB" id="8R83">
    <property type="method" value="EM"/>
    <property type="resolution" value="3.57 A"/>
    <property type="chains" value="N=20-347"/>
</dbReference>
<dbReference type="PDB" id="8R84">
    <property type="method" value="EM"/>
    <property type="resolution" value="3.60 A"/>
    <property type="chains" value="N=20-347"/>
</dbReference>
<dbReference type="PDB" id="8WYR">
    <property type="method" value="EM"/>
    <property type="resolution" value="3.39 A"/>
    <property type="chains" value="M=20-347"/>
</dbReference>
<dbReference type="PDB" id="8WYS">
    <property type="method" value="EM"/>
    <property type="resolution" value="3.41 A"/>
    <property type="chains" value="M=20-347"/>
</dbReference>
<dbReference type="PDBsum" id="8R83"/>
<dbReference type="PDBsum" id="8R84"/>
<dbReference type="PDBsum" id="8WYR"/>
<dbReference type="PDBsum" id="8WYS"/>
<dbReference type="EMDB" id="EMD-18993"/>
<dbReference type="EMDB" id="EMD-18994"/>
<dbReference type="EMDB" id="EMD-37936"/>
<dbReference type="EMDB" id="EMD-37937"/>
<dbReference type="SMR" id="O43866"/>
<dbReference type="FunCoup" id="O43866">
    <property type="interactions" value="6"/>
</dbReference>
<dbReference type="IntAct" id="O43866">
    <property type="interactions" value="7"/>
</dbReference>
<dbReference type="STRING" id="9606.ENSP00000357156"/>
<dbReference type="GlyCosmos" id="O43866">
    <property type="glycosylation" value="1 site, 1 glycan"/>
</dbReference>
<dbReference type="GlyGen" id="O43866">
    <property type="glycosylation" value="2 sites, 1 O-linked glycan (1 site)"/>
</dbReference>
<dbReference type="iPTMnet" id="O43866"/>
<dbReference type="PhosphoSitePlus" id="O43866"/>
<dbReference type="BioMuta" id="CD5L"/>
<dbReference type="CPTAC" id="non-CPTAC-1092"/>
<dbReference type="MassIVE" id="O43866"/>
<dbReference type="PaxDb" id="9606-ENSP00000357156"/>
<dbReference type="PeptideAtlas" id="O43866"/>
<dbReference type="ProteomicsDB" id="49213"/>
<dbReference type="Antibodypedia" id="20452">
    <property type="antibodies" value="507 antibodies from 39 providers"/>
</dbReference>
<dbReference type="DNASU" id="922"/>
<dbReference type="Ensembl" id="ENST00000368174.5">
    <property type="protein sequence ID" value="ENSP00000357156.4"/>
    <property type="gene ID" value="ENSG00000073754.6"/>
</dbReference>
<dbReference type="GeneID" id="922"/>
<dbReference type="KEGG" id="hsa:922"/>
<dbReference type="MANE-Select" id="ENST00000368174.5">
    <property type="protein sequence ID" value="ENSP00000357156.4"/>
    <property type="RefSeq nucleotide sequence ID" value="NM_005894.3"/>
    <property type="RefSeq protein sequence ID" value="NP_005885.1"/>
</dbReference>
<dbReference type="UCSC" id="uc001frk.5">
    <property type="organism name" value="human"/>
</dbReference>
<dbReference type="AGR" id="HGNC:1690"/>
<dbReference type="CTD" id="922"/>
<dbReference type="DisGeNET" id="922"/>
<dbReference type="GeneCards" id="CD5L"/>
<dbReference type="HGNC" id="HGNC:1690">
    <property type="gene designation" value="CD5L"/>
</dbReference>
<dbReference type="HPA" id="ENSG00000073754">
    <property type="expression patterns" value="Tissue enriched (lymphoid)"/>
</dbReference>
<dbReference type="MIM" id="602592">
    <property type="type" value="gene"/>
</dbReference>
<dbReference type="neXtProt" id="NX_O43866"/>
<dbReference type="OpenTargets" id="ENSG00000073754"/>
<dbReference type="PharmGKB" id="PA26229"/>
<dbReference type="VEuPathDB" id="HostDB:ENSG00000073754"/>
<dbReference type="eggNOG" id="ENOG502SHID">
    <property type="taxonomic scope" value="Eukaryota"/>
</dbReference>
<dbReference type="GeneTree" id="ENSGT00940000161974"/>
<dbReference type="HOGENOM" id="CLU_002555_11_0_1"/>
<dbReference type="InParanoid" id="O43866"/>
<dbReference type="OMA" id="EQKGQWG"/>
<dbReference type="OrthoDB" id="536948at2759"/>
<dbReference type="PAN-GO" id="O43866">
    <property type="GO annotations" value="3 GO annotations based on evolutionary models"/>
</dbReference>
<dbReference type="PhylomeDB" id="O43866"/>
<dbReference type="TreeFam" id="TF329295"/>
<dbReference type="PathwayCommons" id="O43866"/>
<dbReference type="SignaLink" id="O43866"/>
<dbReference type="BioGRID-ORCS" id="922">
    <property type="hits" value="8 hits in 1141 CRISPR screens"/>
</dbReference>
<dbReference type="ChiTaRS" id="CD5L">
    <property type="organism name" value="human"/>
</dbReference>
<dbReference type="GeneWiki" id="CD5L"/>
<dbReference type="GenomeRNAi" id="922"/>
<dbReference type="Pharos" id="O43866">
    <property type="development level" value="Tbio"/>
</dbReference>
<dbReference type="PRO" id="PR:O43866"/>
<dbReference type="Proteomes" id="UP000005640">
    <property type="component" value="Chromosome 1"/>
</dbReference>
<dbReference type="RNAct" id="O43866">
    <property type="molecule type" value="protein"/>
</dbReference>
<dbReference type="Bgee" id="ENSG00000073754">
    <property type="expression patterns" value="Expressed in spleen and 84 other cell types or tissues"/>
</dbReference>
<dbReference type="GO" id="GO:0072562">
    <property type="term" value="C:blood microparticle"/>
    <property type="evidence" value="ECO:0007005"/>
    <property type="project" value="UniProtKB"/>
</dbReference>
<dbReference type="GO" id="GO:0009986">
    <property type="term" value="C:cell surface"/>
    <property type="evidence" value="ECO:0000314"/>
    <property type="project" value="MGI"/>
</dbReference>
<dbReference type="GO" id="GO:0005737">
    <property type="term" value="C:cytoplasm"/>
    <property type="evidence" value="ECO:0007669"/>
    <property type="project" value="UniProtKB-SubCell"/>
</dbReference>
<dbReference type="GO" id="GO:0005576">
    <property type="term" value="C:extracellular region"/>
    <property type="evidence" value="ECO:0000303"/>
    <property type="project" value="UniProtKB"/>
</dbReference>
<dbReference type="GO" id="GO:0005615">
    <property type="term" value="C:extracellular space"/>
    <property type="evidence" value="ECO:0000304"/>
    <property type="project" value="ProtInc"/>
</dbReference>
<dbReference type="GO" id="GO:0005886">
    <property type="term" value="C:plasma membrane"/>
    <property type="evidence" value="ECO:0000318"/>
    <property type="project" value="GO_Central"/>
</dbReference>
<dbReference type="GO" id="GO:0006915">
    <property type="term" value="P:apoptotic process"/>
    <property type="evidence" value="ECO:0007669"/>
    <property type="project" value="UniProtKB-KW"/>
</dbReference>
<dbReference type="GO" id="GO:0006968">
    <property type="term" value="P:cellular defense response"/>
    <property type="evidence" value="ECO:0000304"/>
    <property type="project" value="ProtInc"/>
</dbReference>
<dbReference type="GO" id="GO:0002376">
    <property type="term" value="P:immune system process"/>
    <property type="evidence" value="ECO:0007669"/>
    <property type="project" value="UniProtKB-KW"/>
</dbReference>
<dbReference type="GO" id="GO:0006954">
    <property type="term" value="P:inflammatory response"/>
    <property type="evidence" value="ECO:0007669"/>
    <property type="project" value="UniProtKB-KW"/>
</dbReference>
<dbReference type="GO" id="GO:1903661">
    <property type="term" value="P:positive regulation of complement-dependent cytotoxicity"/>
    <property type="evidence" value="ECO:0007669"/>
    <property type="project" value="Ensembl"/>
</dbReference>
<dbReference type="GO" id="GO:0030449">
    <property type="term" value="P:regulation of complement activation"/>
    <property type="evidence" value="ECO:0007669"/>
    <property type="project" value="Ensembl"/>
</dbReference>
<dbReference type="FunFam" id="3.10.250.10:FF:000010">
    <property type="entry name" value="T-cell differentiation antigen CD6"/>
    <property type="match status" value="3"/>
</dbReference>
<dbReference type="Gene3D" id="3.10.250.10">
    <property type="entry name" value="SRCR-like domain"/>
    <property type="match status" value="3"/>
</dbReference>
<dbReference type="InterPro" id="IPR001190">
    <property type="entry name" value="SRCR"/>
</dbReference>
<dbReference type="InterPro" id="IPR036772">
    <property type="entry name" value="SRCR-like_dom_sf"/>
</dbReference>
<dbReference type="PANTHER" id="PTHR48071:SF8">
    <property type="entry name" value="CD5 ANTIGEN-LIKE"/>
    <property type="match status" value="1"/>
</dbReference>
<dbReference type="PANTHER" id="PTHR48071">
    <property type="entry name" value="SRCR DOMAIN-CONTAINING PROTEIN"/>
    <property type="match status" value="1"/>
</dbReference>
<dbReference type="Pfam" id="PF00530">
    <property type="entry name" value="SRCR"/>
    <property type="match status" value="3"/>
</dbReference>
<dbReference type="PRINTS" id="PR00258">
    <property type="entry name" value="SPERACTRCPTR"/>
</dbReference>
<dbReference type="SMART" id="SM00202">
    <property type="entry name" value="SR"/>
    <property type="match status" value="3"/>
</dbReference>
<dbReference type="SUPFAM" id="SSF56487">
    <property type="entry name" value="SRCR-like"/>
    <property type="match status" value="3"/>
</dbReference>
<dbReference type="PROSITE" id="PS00420">
    <property type="entry name" value="SRCR_1"/>
    <property type="match status" value="2"/>
</dbReference>
<dbReference type="PROSITE" id="PS50287">
    <property type="entry name" value="SRCR_2"/>
    <property type="match status" value="3"/>
</dbReference>
<organism>
    <name type="scientific">Homo sapiens</name>
    <name type="common">Human</name>
    <dbReference type="NCBI Taxonomy" id="9606"/>
    <lineage>
        <taxon>Eukaryota</taxon>
        <taxon>Metazoa</taxon>
        <taxon>Chordata</taxon>
        <taxon>Craniata</taxon>
        <taxon>Vertebrata</taxon>
        <taxon>Euteleostomi</taxon>
        <taxon>Mammalia</taxon>
        <taxon>Eutheria</taxon>
        <taxon>Euarchontoglires</taxon>
        <taxon>Primates</taxon>
        <taxon>Haplorrhini</taxon>
        <taxon>Catarrhini</taxon>
        <taxon>Hominidae</taxon>
        <taxon>Homo</taxon>
    </lineage>
</organism>
<comment type="function">
    <text evidence="1 4 6 7 8 10">Secreted protein that acts as a key regulator of lipid synthesis: mainly expressed by macrophages in lymphoid and inflamed tissues and regulates mechanisms in inflammatory responses, such as infection or atherosclerosis. Able to inhibit lipid droplet size in adipocytes. Following incorporation into mature adipocytes via CD36-mediated endocytosis, associates with cytosolic FASN, inhibiting fatty acid synthase activity and leading to lipolysis, the degradation of triacylglycerols into glycerol and free fatty acids (FFA). CD5L-induced lipolysis occurs with progression of obesity: participates in obesity-associated inflammation following recruitment of inflammatory macrophages into adipose tissues, a cause of insulin resistance and obesity-related metabolic disease. Regulation of intracellular lipids mediated by CD5L has a direct effect on transcription regulation mediated by nuclear receptors ROR-gamma (RORC). Acts as a key regulator of metabolic switch in T-helper Th17 cells. Regulates the expression of pro-inflammatory genes in Th17 cells by altering the lipid content and limiting synthesis of cholesterol ligand of RORC, the master transcription factor of Th17-cell differentiation. CD5L is mainly present in non-pathogenic Th17 cells, where it decreases the content of polyunsaturated fatty acyls (PUFA), affecting two metabolic proteins MSMO1 and CYP51A1, which synthesize ligands of RORC, limiting RORC activity and expression of pro-inflammatory genes. Participates in obesity-associated autoimmunity via its association with IgM, interfering with the binding of IgM to Fcalpha/mu receptor and enhancing the development of long-lived plasma cells that produce high-affinity IgG autoantibodies (By similarity). Also acts as an inhibitor of apoptosis in macrophages: promotes macrophage survival from the apoptotic effects of oxidized lipids in case of atherosclerosis (PubMed:24295828). Involved in early response to microbial infection against various pathogens by acting as a pattern recognition receptor and by promoting autophagy (PubMed:16030018, PubMed:24223991, PubMed:24583716, PubMed:25713983).</text>
</comment>
<comment type="subunit">
    <text evidence="1 9 11">Interacts with FASN; the interaction is direct (By similarity). Interacts (via SRCR2 and SRCR3) with pentameric IgM (via Fc region); disulfide-linked (PubMed:24804991, PubMed:8034987).</text>
</comment>
<comment type="subcellular location">
    <subcellularLocation>
        <location evidence="6 9">Secreted</location>
    </subcellularLocation>
    <subcellularLocation>
        <location evidence="1">Cytoplasm</location>
    </subcellularLocation>
    <text evidence="1 6 9">Secreted by macrophages and circulates in the blood (PubMed:24223991, PubMed:24804991). Transported in the cytoplasm via CD36-mediated endocytosis (By similarity).</text>
</comment>
<comment type="tissue specificity">
    <text evidence="12">Expressed in spleen, lymph node, thymus, bone marrow, and fetal liver, but not in non-lymphoid tissues.</text>
</comment>
<comment type="PTM">
    <text evidence="5">Not N-glycosylated (PubMed:23236605). Probably not O-glycosylated (PubMed:23236605).</text>
</comment>
<keyword id="KW-0002">3D-structure</keyword>
<keyword id="KW-0053">Apoptosis</keyword>
<keyword id="KW-0963">Cytoplasm</keyword>
<keyword id="KW-0903">Direct protein sequencing</keyword>
<keyword id="KW-1015">Disulfide bond</keyword>
<keyword id="KW-0325">Glycoprotein</keyword>
<keyword id="KW-0391">Immunity</keyword>
<keyword id="KW-0395">Inflammatory response</keyword>
<keyword id="KW-1267">Proteomics identification</keyword>
<keyword id="KW-1185">Reference proteome</keyword>
<keyword id="KW-0677">Repeat</keyword>
<keyword id="KW-0964">Secreted</keyword>
<keyword id="KW-0732">Signal</keyword>
<protein>
    <recommendedName>
        <fullName>CD5 antigen-like</fullName>
    </recommendedName>
    <alternativeName>
        <fullName evidence="14">Apoptosis inhibitor expressed by macrophages</fullName>
        <shortName evidence="14">hAIM</shortName>
    </alternativeName>
    <alternativeName>
        <fullName evidence="17">CT-2</fullName>
    </alternativeName>
    <alternativeName>
        <fullName evidence="15">IgM-associated peptide</fullName>
    </alternativeName>
    <alternativeName>
        <fullName evidence="16">SP-alpha</fullName>
    </alternativeName>
</protein>
<sequence>MALLFSLILAICTRPGFLASPSGVRLVGGLHRCEGRVEVEQKGQWGTVCDDGWDIKDVAVLCRELGCGAASGTPSGILYEPPAEKEQKVLIQSVSCTGTEDTLAQCEQEEVYDCSHDEDAGASCENPESSFSPVPEGVRLADGPGHCKGRVEVKHQNQWYTVCQTGWSLRAAKVVCRQLGCGRAVLTQKRCNKHAYGRKPIWLSQMSCSGREATLQDCPSGPWGKNTCNHDEDTWVECEDPFDLRLVGGDNLCSGRLEVLHKGVWGSVCDDNWGEKEDQVVCKQLGCGKSLSPSFRDRKCYGPGVGRIWLDNVRCSGEEQSLEQCQHRFWGFHDCTHQEDVAVICSG</sequence>
<name>CD5L_HUMAN</name>